<keyword id="KW-0067">ATP-binding</keyword>
<keyword id="KW-0963">Cytoplasm</keyword>
<keyword id="KW-0210">Decarboxylase</keyword>
<keyword id="KW-0312">Gluconeogenesis</keyword>
<keyword id="KW-0456">Lyase</keyword>
<keyword id="KW-0464">Manganese</keyword>
<keyword id="KW-0479">Metal-binding</keyword>
<keyword id="KW-0547">Nucleotide-binding</keyword>
<keyword id="KW-1185">Reference proteome</keyword>
<sequence length="513" mass="55901">MADGSKQTHKNPSTAQLVEFALARGEGELTANGALVAKTGERTGRSPNDRFIVKEASSENDIDWGSVNKPFAMDAFNALWDRVATYLADKETFVSELEVGADPEHYQPIEVKTETAWHQLFARNLFIVPEQFNVANKPVWQIMNAPGFECDPARDGTNSDATVIINFADRKVLLAGLKYAGEMKKSMFSVQNFLLPAKGVLPMHCSANVGSEGDTTLFFGLSGTGKTTLSADPKRFLIGDDEHGWAPGGVFNIEGGCYAKCIDLSQKNEPVIWDAIRFGTVLENVTLDEQRIPDYSNTELTENSRAAYPLEHIAQRKEENRGAEPNAVVFLTCDVSGVLPPVSKLSKEQAAYHFLSGYTAKVGSTEMGSTSAIQSTFSTCFGAPFFPRPAGVYAELLMKRIESFGSQVYLVNTGWTGGPHGVGKRFDIPTTRAIVDAIVSGELKDVETVHIDKLNLDVPVAVTGVDAKLLNPVNTWADKAEYDKYAQQLAEEFAANFTKYDVSDAIKQAGPKA</sequence>
<organism>
    <name type="scientific">Shewanella loihica (strain ATCC BAA-1088 / PV-4)</name>
    <dbReference type="NCBI Taxonomy" id="323850"/>
    <lineage>
        <taxon>Bacteria</taxon>
        <taxon>Pseudomonadati</taxon>
        <taxon>Pseudomonadota</taxon>
        <taxon>Gammaproteobacteria</taxon>
        <taxon>Alteromonadales</taxon>
        <taxon>Shewanellaceae</taxon>
        <taxon>Shewanella</taxon>
    </lineage>
</organism>
<proteinExistence type="inferred from homology"/>
<gene>
    <name evidence="1" type="primary">pckA</name>
    <name type="ordered locus">Shew_3623</name>
</gene>
<feature type="chain" id="PRO_1000026354" description="Phosphoenolpyruvate carboxykinase (ATP)">
    <location>
        <begin position="1"/>
        <end position="513"/>
    </location>
</feature>
<feature type="binding site" evidence="1">
    <location>
        <position position="45"/>
    </location>
    <ligand>
        <name>substrate</name>
    </ligand>
</feature>
<feature type="binding site" evidence="1">
    <location>
        <position position="179"/>
    </location>
    <ligand>
        <name>substrate</name>
    </ligand>
</feature>
<feature type="binding site" evidence="1">
    <location>
        <position position="185"/>
    </location>
    <ligand>
        <name>ATP</name>
        <dbReference type="ChEBI" id="CHEBI:30616"/>
    </ligand>
</feature>
<feature type="binding site" evidence="1">
    <location>
        <position position="185"/>
    </location>
    <ligand>
        <name>Mn(2+)</name>
        <dbReference type="ChEBI" id="CHEBI:29035"/>
    </ligand>
</feature>
<feature type="binding site" evidence="1">
    <location>
        <position position="185"/>
    </location>
    <ligand>
        <name>substrate</name>
    </ligand>
</feature>
<feature type="binding site" evidence="1">
    <location>
        <position position="204"/>
    </location>
    <ligand>
        <name>ATP</name>
        <dbReference type="ChEBI" id="CHEBI:30616"/>
    </ligand>
</feature>
<feature type="binding site" evidence="1">
    <location>
        <position position="204"/>
    </location>
    <ligand>
        <name>Mn(2+)</name>
        <dbReference type="ChEBI" id="CHEBI:29035"/>
    </ligand>
</feature>
<feature type="binding site" evidence="1">
    <location>
        <begin position="220"/>
        <end position="228"/>
    </location>
    <ligand>
        <name>ATP</name>
        <dbReference type="ChEBI" id="CHEBI:30616"/>
    </ligand>
</feature>
<feature type="binding site" evidence="1">
    <location>
        <position position="241"/>
    </location>
    <ligand>
        <name>Mn(2+)</name>
        <dbReference type="ChEBI" id="CHEBI:29035"/>
    </ligand>
</feature>
<feature type="binding site" evidence="1">
    <location>
        <position position="269"/>
    </location>
    <ligand>
        <name>ATP</name>
        <dbReference type="ChEBI" id="CHEBI:30616"/>
    </ligand>
</feature>
<feature type="binding site" evidence="1">
    <location>
        <position position="305"/>
    </location>
    <ligand>
        <name>ATP</name>
        <dbReference type="ChEBI" id="CHEBI:30616"/>
    </ligand>
</feature>
<feature type="binding site" evidence="1">
    <location>
        <position position="305"/>
    </location>
    <ligand>
        <name>substrate</name>
    </ligand>
</feature>
<feature type="binding site" evidence="1">
    <location>
        <position position="431"/>
    </location>
    <ligand>
        <name>ATP</name>
        <dbReference type="ChEBI" id="CHEBI:30616"/>
    </ligand>
</feature>
<accession>A3QJ41</accession>
<name>PCKA_SHELP</name>
<reference key="1">
    <citation type="submission" date="2007-03" db="EMBL/GenBank/DDBJ databases">
        <title>Complete sequence of Shewanella loihica PV-4.</title>
        <authorList>
            <consortium name="US DOE Joint Genome Institute"/>
            <person name="Copeland A."/>
            <person name="Lucas S."/>
            <person name="Lapidus A."/>
            <person name="Barry K."/>
            <person name="Detter J.C."/>
            <person name="Glavina del Rio T."/>
            <person name="Hammon N."/>
            <person name="Israni S."/>
            <person name="Dalin E."/>
            <person name="Tice H."/>
            <person name="Pitluck S."/>
            <person name="Chain P."/>
            <person name="Malfatti S."/>
            <person name="Shin M."/>
            <person name="Vergez L."/>
            <person name="Schmutz J."/>
            <person name="Larimer F."/>
            <person name="Land M."/>
            <person name="Hauser L."/>
            <person name="Kyrpides N."/>
            <person name="Mikhailova N."/>
            <person name="Romine M.F."/>
            <person name="Serres G."/>
            <person name="Fredrickson J."/>
            <person name="Tiedje J."/>
            <person name="Richardson P."/>
        </authorList>
    </citation>
    <scope>NUCLEOTIDE SEQUENCE [LARGE SCALE GENOMIC DNA]</scope>
    <source>
        <strain>ATCC BAA-1088 / PV-4</strain>
    </source>
</reference>
<evidence type="ECO:0000255" key="1">
    <source>
        <dbReference type="HAMAP-Rule" id="MF_00453"/>
    </source>
</evidence>
<protein>
    <recommendedName>
        <fullName evidence="1">Phosphoenolpyruvate carboxykinase (ATP)</fullName>
        <shortName evidence="1">PCK</shortName>
        <shortName evidence="1">PEP carboxykinase</shortName>
        <shortName evidence="1">PEPCK</shortName>
        <ecNumber evidence="1">4.1.1.49</ecNumber>
    </recommendedName>
</protein>
<dbReference type="EC" id="4.1.1.49" evidence="1"/>
<dbReference type="EMBL" id="CP000606">
    <property type="protein sequence ID" value="ABO25489.1"/>
    <property type="molecule type" value="Genomic_DNA"/>
</dbReference>
<dbReference type="RefSeq" id="WP_011867417.1">
    <property type="nucleotide sequence ID" value="NC_009092.1"/>
</dbReference>
<dbReference type="SMR" id="A3QJ41"/>
<dbReference type="STRING" id="323850.Shew_3623"/>
<dbReference type="KEGG" id="slo:Shew_3623"/>
<dbReference type="eggNOG" id="COG1866">
    <property type="taxonomic scope" value="Bacteria"/>
</dbReference>
<dbReference type="HOGENOM" id="CLU_018247_0_1_6"/>
<dbReference type="OrthoDB" id="9806325at2"/>
<dbReference type="UniPathway" id="UPA00138"/>
<dbReference type="Proteomes" id="UP000001558">
    <property type="component" value="Chromosome"/>
</dbReference>
<dbReference type="GO" id="GO:0005829">
    <property type="term" value="C:cytosol"/>
    <property type="evidence" value="ECO:0007669"/>
    <property type="project" value="TreeGrafter"/>
</dbReference>
<dbReference type="GO" id="GO:0005524">
    <property type="term" value="F:ATP binding"/>
    <property type="evidence" value="ECO:0007669"/>
    <property type="project" value="UniProtKB-UniRule"/>
</dbReference>
<dbReference type="GO" id="GO:0046872">
    <property type="term" value="F:metal ion binding"/>
    <property type="evidence" value="ECO:0007669"/>
    <property type="project" value="UniProtKB-KW"/>
</dbReference>
<dbReference type="GO" id="GO:0004612">
    <property type="term" value="F:phosphoenolpyruvate carboxykinase (ATP) activity"/>
    <property type="evidence" value="ECO:0007669"/>
    <property type="project" value="UniProtKB-UniRule"/>
</dbReference>
<dbReference type="GO" id="GO:0006094">
    <property type="term" value="P:gluconeogenesis"/>
    <property type="evidence" value="ECO:0007669"/>
    <property type="project" value="UniProtKB-UniRule"/>
</dbReference>
<dbReference type="CDD" id="cd00484">
    <property type="entry name" value="PEPCK_ATP"/>
    <property type="match status" value="1"/>
</dbReference>
<dbReference type="Gene3D" id="3.90.228.20">
    <property type="match status" value="1"/>
</dbReference>
<dbReference type="Gene3D" id="3.40.449.10">
    <property type="entry name" value="Phosphoenolpyruvate Carboxykinase, domain 1"/>
    <property type="match status" value="1"/>
</dbReference>
<dbReference type="Gene3D" id="2.170.8.10">
    <property type="entry name" value="Phosphoenolpyruvate Carboxykinase, domain 2"/>
    <property type="match status" value="1"/>
</dbReference>
<dbReference type="HAMAP" id="MF_00453">
    <property type="entry name" value="PEPCK_ATP"/>
    <property type="match status" value="1"/>
</dbReference>
<dbReference type="InterPro" id="IPR001272">
    <property type="entry name" value="PEP_carboxykinase_ATP"/>
</dbReference>
<dbReference type="InterPro" id="IPR013035">
    <property type="entry name" value="PEP_carboxykinase_C"/>
</dbReference>
<dbReference type="InterPro" id="IPR008210">
    <property type="entry name" value="PEP_carboxykinase_N"/>
</dbReference>
<dbReference type="InterPro" id="IPR015994">
    <property type="entry name" value="PEPCK_ATP_CS"/>
</dbReference>
<dbReference type="NCBIfam" id="TIGR00224">
    <property type="entry name" value="pckA"/>
    <property type="match status" value="1"/>
</dbReference>
<dbReference type="NCBIfam" id="NF006820">
    <property type="entry name" value="PRK09344.1-2"/>
    <property type="match status" value="1"/>
</dbReference>
<dbReference type="NCBIfam" id="NF006821">
    <property type="entry name" value="PRK09344.1-3"/>
    <property type="match status" value="1"/>
</dbReference>
<dbReference type="NCBIfam" id="NF006823">
    <property type="entry name" value="PRK09344.1-5"/>
    <property type="match status" value="1"/>
</dbReference>
<dbReference type="PANTHER" id="PTHR30031:SF0">
    <property type="entry name" value="PHOSPHOENOLPYRUVATE CARBOXYKINASE (ATP)"/>
    <property type="match status" value="1"/>
</dbReference>
<dbReference type="PANTHER" id="PTHR30031">
    <property type="entry name" value="PHOSPHOENOLPYRUVATE CARBOXYKINASE ATP"/>
    <property type="match status" value="1"/>
</dbReference>
<dbReference type="Pfam" id="PF01293">
    <property type="entry name" value="PEPCK_ATP"/>
    <property type="match status" value="1"/>
</dbReference>
<dbReference type="PIRSF" id="PIRSF006294">
    <property type="entry name" value="PEP_crbxkin"/>
    <property type="match status" value="1"/>
</dbReference>
<dbReference type="SUPFAM" id="SSF68923">
    <property type="entry name" value="PEP carboxykinase N-terminal domain"/>
    <property type="match status" value="1"/>
</dbReference>
<dbReference type="SUPFAM" id="SSF53795">
    <property type="entry name" value="PEP carboxykinase-like"/>
    <property type="match status" value="1"/>
</dbReference>
<dbReference type="PROSITE" id="PS00532">
    <property type="entry name" value="PEPCK_ATP"/>
    <property type="match status" value="1"/>
</dbReference>
<comment type="function">
    <text evidence="1">Involved in the gluconeogenesis. Catalyzes the conversion of oxaloacetate (OAA) to phosphoenolpyruvate (PEP) through direct phosphoryl transfer between the nucleoside triphosphate and OAA.</text>
</comment>
<comment type="catalytic activity">
    <reaction evidence="1">
        <text>oxaloacetate + ATP = phosphoenolpyruvate + ADP + CO2</text>
        <dbReference type="Rhea" id="RHEA:18617"/>
        <dbReference type="ChEBI" id="CHEBI:16452"/>
        <dbReference type="ChEBI" id="CHEBI:16526"/>
        <dbReference type="ChEBI" id="CHEBI:30616"/>
        <dbReference type="ChEBI" id="CHEBI:58702"/>
        <dbReference type="ChEBI" id="CHEBI:456216"/>
        <dbReference type="EC" id="4.1.1.49"/>
    </reaction>
</comment>
<comment type="cofactor">
    <cofactor evidence="1">
        <name>Mn(2+)</name>
        <dbReference type="ChEBI" id="CHEBI:29035"/>
    </cofactor>
    <text evidence="1">Binds 1 Mn(2+) ion per subunit.</text>
</comment>
<comment type="pathway">
    <text evidence="1">Carbohydrate biosynthesis; gluconeogenesis.</text>
</comment>
<comment type="subunit">
    <text evidence="1">Monomer.</text>
</comment>
<comment type="subcellular location">
    <subcellularLocation>
        <location evidence="1">Cytoplasm</location>
    </subcellularLocation>
</comment>
<comment type="similarity">
    <text evidence="1">Belongs to the phosphoenolpyruvate carboxykinase (ATP) family.</text>
</comment>